<sequence>MNLQAVSCSFGFLSSPLGVTPRTSFRRFVIRAKTEPSEKSVEIMRKFSEQYARRSGTYFCVDKGVTSVVIKGLAEHKDSYGAPLCPCRHYDDKAAEVGQGFWNCPCVPMRERKECHCMLFLTPDNDFAGKDQTITSDEIKETTANM</sequence>
<gene>
    <name evidence="1" type="primary">FTRC</name>
    <name evidence="4" type="synonym">FTRB</name>
    <name evidence="6" type="ordered locus">At2g04700</name>
    <name evidence="7" type="ORF">F28I8.26</name>
</gene>
<keyword id="KW-0002">3D-structure</keyword>
<keyword id="KW-0004">4Fe-4S</keyword>
<keyword id="KW-0150">Chloroplast</keyword>
<keyword id="KW-1015">Disulfide bond</keyword>
<keyword id="KW-0408">Iron</keyword>
<keyword id="KW-0411">Iron-sulfur</keyword>
<keyword id="KW-0479">Metal-binding</keyword>
<keyword id="KW-0560">Oxidoreductase</keyword>
<keyword id="KW-0934">Plastid</keyword>
<keyword id="KW-0676">Redox-active center</keyword>
<keyword id="KW-1185">Reference proteome</keyword>
<keyword id="KW-0809">Transit peptide</keyword>
<comment type="function">
    <text evidence="1">Catalytic subunit of the ferredoxin-thioredoxin reductase (FTR), which catalyzes the two-electron reduction of thioredoxins by the electrons provided by reduced ferredoxin.</text>
</comment>
<comment type="catalytic activity">
    <reaction evidence="1">
        <text>[thioredoxin]-disulfide + 2 reduced [2Fe-2S]-[ferredoxin] + 2 H(+) = [thioredoxin]-dithiol + 2 oxidized [2Fe-2S]-[ferredoxin]</text>
        <dbReference type="Rhea" id="RHEA:42336"/>
        <dbReference type="Rhea" id="RHEA-COMP:10000"/>
        <dbReference type="Rhea" id="RHEA-COMP:10001"/>
        <dbReference type="Rhea" id="RHEA-COMP:10698"/>
        <dbReference type="Rhea" id="RHEA-COMP:10700"/>
        <dbReference type="ChEBI" id="CHEBI:15378"/>
        <dbReference type="ChEBI" id="CHEBI:29950"/>
        <dbReference type="ChEBI" id="CHEBI:33737"/>
        <dbReference type="ChEBI" id="CHEBI:33738"/>
        <dbReference type="ChEBI" id="CHEBI:50058"/>
        <dbReference type="EC" id="1.8.7.2"/>
    </reaction>
</comment>
<comment type="cofactor">
    <cofactor evidence="1">
        <name>[4Fe-4S] cluster</name>
        <dbReference type="ChEBI" id="CHEBI:49883"/>
    </cofactor>
    <text evidence="1">Binds 1 [4Fe-4S] cluster.</text>
</comment>
<comment type="subunit">
    <text evidence="1">Heterodimer of subunit A (variable subunit) and subunit B (catalytic subunit) (By similarity). Heterodimeric FTR forms a complex with ferredoxin and thioredoxin (By similarity).</text>
</comment>
<comment type="subcellular location">
    <subcellularLocation>
        <location evidence="2">Plastid</location>
        <location evidence="2">Chloroplast</location>
    </subcellularLocation>
</comment>
<comment type="similarity">
    <text evidence="5">Belongs to the ferredoxin thioredoxin reductase beta subunit family.</text>
</comment>
<dbReference type="EC" id="1.8.7.2" evidence="1"/>
<dbReference type="EMBL" id="AC006955">
    <property type="protein sequence ID" value="AAD22336.1"/>
    <property type="molecule type" value="Genomic_DNA"/>
</dbReference>
<dbReference type="EMBL" id="CP002685">
    <property type="protein sequence ID" value="AEC05858.1"/>
    <property type="molecule type" value="Genomic_DNA"/>
</dbReference>
<dbReference type="EMBL" id="CP002685">
    <property type="protein sequence ID" value="ANM61570.1"/>
    <property type="molecule type" value="Genomic_DNA"/>
</dbReference>
<dbReference type="EMBL" id="AY063795">
    <property type="protein sequence ID" value="AAL36151.1"/>
    <property type="molecule type" value="mRNA"/>
</dbReference>
<dbReference type="EMBL" id="AY117167">
    <property type="protein sequence ID" value="AAM51242.1"/>
    <property type="molecule type" value="mRNA"/>
</dbReference>
<dbReference type="EMBL" id="AY088058">
    <property type="protein sequence ID" value="AAM65604.1"/>
    <property type="molecule type" value="mRNA"/>
</dbReference>
<dbReference type="PIR" id="D84460">
    <property type="entry name" value="D84460"/>
</dbReference>
<dbReference type="RefSeq" id="NP_001323778.1">
    <property type="nucleotide sequence ID" value="NM_001335245.1"/>
</dbReference>
<dbReference type="RefSeq" id="NP_178547.1">
    <property type="nucleotide sequence ID" value="NM_126500.5"/>
</dbReference>
<dbReference type="PDB" id="7BZK">
    <property type="method" value="X-ray"/>
    <property type="resolution" value="1.59 A"/>
    <property type="chains" value="A=32-146"/>
</dbReference>
<dbReference type="PDB" id="7C2B">
    <property type="method" value="X-ray"/>
    <property type="resolution" value="1.79 A"/>
    <property type="chains" value="A=32-146"/>
</dbReference>
<dbReference type="PDB" id="7C3F">
    <property type="method" value="X-ray"/>
    <property type="resolution" value="2.40 A"/>
    <property type="chains" value="A/D/G/J/M/P/S/V=32-146"/>
</dbReference>
<dbReference type="PDBsum" id="7BZK"/>
<dbReference type="PDBsum" id="7C2B"/>
<dbReference type="PDBsum" id="7C3F"/>
<dbReference type="SMR" id="Q9SJ89"/>
<dbReference type="BioGRID" id="414">
    <property type="interactions" value="1"/>
</dbReference>
<dbReference type="FunCoup" id="Q9SJ89">
    <property type="interactions" value="1091"/>
</dbReference>
<dbReference type="STRING" id="3702.Q9SJ89"/>
<dbReference type="MetOSite" id="Q9SJ89"/>
<dbReference type="PaxDb" id="3702-AT2G04700.1"/>
<dbReference type="ProteomicsDB" id="230532"/>
<dbReference type="EnsemblPlants" id="AT2G04700.1">
    <property type="protein sequence ID" value="AT2G04700.1"/>
    <property type="gene ID" value="AT2G04700"/>
</dbReference>
<dbReference type="EnsemblPlants" id="AT2G04700.3">
    <property type="protein sequence ID" value="AT2G04700.3"/>
    <property type="gene ID" value="AT2G04700"/>
</dbReference>
<dbReference type="GeneID" id="815013"/>
<dbReference type="Gramene" id="AT2G04700.1">
    <property type="protein sequence ID" value="AT2G04700.1"/>
    <property type="gene ID" value="AT2G04700"/>
</dbReference>
<dbReference type="Gramene" id="AT2G04700.3">
    <property type="protein sequence ID" value="AT2G04700.3"/>
    <property type="gene ID" value="AT2G04700"/>
</dbReference>
<dbReference type="KEGG" id="ath:AT2G04700"/>
<dbReference type="Araport" id="AT2G04700"/>
<dbReference type="TAIR" id="AT2G04700">
    <property type="gene designation" value="INAP1"/>
</dbReference>
<dbReference type="eggNOG" id="ENOG502RZRI">
    <property type="taxonomic scope" value="Eukaryota"/>
</dbReference>
<dbReference type="HOGENOM" id="CLU_108772_1_1_1"/>
<dbReference type="InParanoid" id="Q9SJ89"/>
<dbReference type="OMA" id="YCHCLLF"/>
<dbReference type="OrthoDB" id="1641at2759"/>
<dbReference type="PhylomeDB" id="Q9SJ89"/>
<dbReference type="BioCyc" id="ARA:AT2G04700-MONOMER"/>
<dbReference type="PRO" id="PR:Q9SJ89"/>
<dbReference type="Proteomes" id="UP000006548">
    <property type="component" value="Chromosome 2"/>
</dbReference>
<dbReference type="ExpressionAtlas" id="Q9SJ89">
    <property type="expression patterns" value="baseline and differential"/>
</dbReference>
<dbReference type="GO" id="GO:0009507">
    <property type="term" value="C:chloroplast"/>
    <property type="evidence" value="ECO:0007005"/>
    <property type="project" value="TAIR"/>
</dbReference>
<dbReference type="GO" id="GO:0009941">
    <property type="term" value="C:chloroplast envelope"/>
    <property type="evidence" value="ECO:0007005"/>
    <property type="project" value="TAIR"/>
</dbReference>
<dbReference type="GO" id="GO:0009570">
    <property type="term" value="C:chloroplast stroma"/>
    <property type="evidence" value="ECO:0007005"/>
    <property type="project" value="TAIR"/>
</dbReference>
<dbReference type="GO" id="GO:0051539">
    <property type="term" value="F:4 iron, 4 sulfur cluster binding"/>
    <property type="evidence" value="ECO:0000250"/>
    <property type="project" value="UniProtKB"/>
</dbReference>
<dbReference type="GO" id="GO:0009055">
    <property type="term" value="F:electron transfer activity"/>
    <property type="evidence" value="ECO:0000250"/>
    <property type="project" value="UniProtKB"/>
</dbReference>
<dbReference type="GO" id="GO:0103012">
    <property type="term" value="F:ferredoxin-thioredoxin reductase activity"/>
    <property type="evidence" value="ECO:0000314"/>
    <property type="project" value="TAIR"/>
</dbReference>
<dbReference type="GO" id="GO:0046872">
    <property type="term" value="F:metal ion binding"/>
    <property type="evidence" value="ECO:0007669"/>
    <property type="project" value="UniProtKB-KW"/>
</dbReference>
<dbReference type="GO" id="GO:0016730">
    <property type="term" value="F:oxidoreductase activity, acting on iron-sulfur proteins as donors"/>
    <property type="evidence" value="ECO:0007669"/>
    <property type="project" value="InterPro"/>
</dbReference>
<dbReference type="FunFam" id="3.90.460.10:FF:000001">
    <property type="entry name" value="Ferredoxin-thioredoxin reductase, catalytic chain"/>
    <property type="match status" value="1"/>
</dbReference>
<dbReference type="Gene3D" id="3.90.460.10">
    <property type="entry name" value="Ferredoxin thioredoxin reductase catalytic beta subunit"/>
    <property type="match status" value="1"/>
</dbReference>
<dbReference type="InterPro" id="IPR004209">
    <property type="entry name" value="FTR_bsu"/>
</dbReference>
<dbReference type="InterPro" id="IPR036644">
    <property type="entry name" value="FTR_bsu_sf"/>
</dbReference>
<dbReference type="PANTHER" id="PTHR35113">
    <property type="entry name" value="FERREDOXIN-THIOREDOXIN REDUCTASE CATALYTIC CHAIN, CHLOROPLASTIC"/>
    <property type="match status" value="1"/>
</dbReference>
<dbReference type="PANTHER" id="PTHR35113:SF1">
    <property type="entry name" value="FERREDOXIN-THIOREDOXIN REDUCTASE CATALYTIC CHAIN, CHLOROPLASTIC"/>
    <property type="match status" value="1"/>
</dbReference>
<dbReference type="Pfam" id="PF02943">
    <property type="entry name" value="FeThRed_B"/>
    <property type="match status" value="1"/>
</dbReference>
<dbReference type="SUPFAM" id="SSF57662">
    <property type="entry name" value="Ferredoxin thioredoxin reductase (FTR), catalytic beta chain"/>
    <property type="match status" value="1"/>
</dbReference>
<organism>
    <name type="scientific">Arabidopsis thaliana</name>
    <name type="common">Mouse-ear cress</name>
    <dbReference type="NCBI Taxonomy" id="3702"/>
    <lineage>
        <taxon>Eukaryota</taxon>
        <taxon>Viridiplantae</taxon>
        <taxon>Streptophyta</taxon>
        <taxon>Embryophyta</taxon>
        <taxon>Tracheophyta</taxon>
        <taxon>Spermatophyta</taxon>
        <taxon>Magnoliopsida</taxon>
        <taxon>eudicotyledons</taxon>
        <taxon>Gunneridae</taxon>
        <taxon>Pentapetalae</taxon>
        <taxon>rosids</taxon>
        <taxon>malvids</taxon>
        <taxon>Brassicales</taxon>
        <taxon>Brassicaceae</taxon>
        <taxon>Camelineae</taxon>
        <taxon>Arabidopsis</taxon>
    </lineage>
</organism>
<name>FTRC_ARATH</name>
<accession>Q9SJ89</accession>
<feature type="transit peptide" description="Chloroplast" evidence="2">
    <location>
        <begin position="1"/>
        <end position="31"/>
    </location>
</feature>
<feature type="chain" id="PRO_0000394553" description="Ferredoxin-thioredoxin reductase catalytic chain, chloroplastic">
    <location>
        <begin position="32"/>
        <end position="146"/>
    </location>
</feature>
<feature type="active site" description="Nucleophile" evidence="1">
    <location>
        <position position="87"/>
    </location>
</feature>
<feature type="binding site" evidence="3 8 9 10">
    <location>
        <position position="85"/>
    </location>
    <ligand>
        <name>[4Fe-4S] cluster</name>
        <dbReference type="ChEBI" id="CHEBI:49883"/>
    </ligand>
</feature>
<feature type="binding site" evidence="3 8 9 10">
    <location>
        <position position="104"/>
    </location>
    <ligand>
        <name>[4Fe-4S] cluster</name>
        <dbReference type="ChEBI" id="CHEBI:49883"/>
    </ligand>
</feature>
<feature type="binding site" evidence="3 8 9 10">
    <location>
        <position position="106"/>
    </location>
    <ligand>
        <name>[4Fe-4S] cluster</name>
        <dbReference type="ChEBI" id="CHEBI:49883"/>
    </ligand>
</feature>
<feature type="binding site" evidence="3 8 9 10">
    <location>
        <position position="115"/>
    </location>
    <ligand>
        <name>[4Fe-4S] cluster</name>
        <dbReference type="ChEBI" id="CHEBI:49883"/>
    </ligand>
</feature>
<feature type="site" description="Increases the nucleophilicity of the active site Cys" evidence="1">
    <location>
        <position position="116"/>
    </location>
</feature>
<feature type="disulfide bond" description="Redox-active" evidence="1">
    <location>
        <begin position="87"/>
        <end position="117"/>
    </location>
</feature>
<feature type="helix" evidence="11">
    <location>
        <begin position="38"/>
        <end position="55"/>
    </location>
</feature>
<feature type="strand" evidence="11">
    <location>
        <begin position="60"/>
        <end position="62"/>
    </location>
</feature>
<feature type="helix" evidence="11">
    <location>
        <begin position="63"/>
        <end position="80"/>
    </location>
</feature>
<feature type="strand" evidence="11">
    <location>
        <begin position="86"/>
        <end position="88"/>
    </location>
</feature>
<feature type="helix" evidence="11">
    <location>
        <begin position="93"/>
        <end position="99"/>
    </location>
</feature>
<feature type="strand" evidence="11">
    <location>
        <begin position="103"/>
        <end position="105"/>
    </location>
</feature>
<feature type="helix" evidence="11">
    <location>
        <begin position="107"/>
        <end position="112"/>
    </location>
</feature>
<feature type="strand" evidence="11">
    <location>
        <begin position="118"/>
        <end position="121"/>
    </location>
</feature>
<feature type="helix" evidence="11">
    <location>
        <begin position="136"/>
        <end position="142"/>
    </location>
</feature>
<feature type="turn" evidence="12">
    <location>
        <begin position="143"/>
        <end position="145"/>
    </location>
</feature>
<reference key="1">
    <citation type="journal article" date="1999" name="Nature">
        <title>Sequence and analysis of chromosome 2 of the plant Arabidopsis thaliana.</title>
        <authorList>
            <person name="Lin X."/>
            <person name="Kaul S."/>
            <person name="Rounsley S.D."/>
            <person name="Shea T.P."/>
            <person name="Benito M.-I."/>
            <person name="Town C.D."/>
            <person name="Fujii C.Y."/>
            <person name="Mason T.M."/>
            <person name="Bowman C.L."/>
            <person name="Barnstead M.E."/>
            <person name="Feldblyum T.V."/>
            <person name="Buell C.R."/>
            <person name="Ketchum K.A."/>
            <person name="Lee J.J."/>
            <person name="Ronning C.M."/>
            <person name="Koo H.L."/>
            <person name="Moffat K.S."/>
            <person name="Cronin L.A."/>
            <person name="Shen M."/>
            <person name="Pai G."/>
            <person name="Van Aken S."/>
            <person name="Umayam L."/>
            <person name="Tallon L.J."/>
            <person name="Gill J.E."/>
            <person name="Adams M.D."/>
            <person name="Carrera A.J."/>
            <person name="Creasy T.H."/>
            <person name="Goodman H.M."/>
            <person name="Somerville C.R."/>
            <person name="Copenhaver G.P."/>
            <person name="Preuss D."/>
            <person name="Nierman W.C."/>
            <person name="White O."/>
            <person name="Eisen J.A."/>
            <person name="Salzberg S.L."/>
            <person name="Fraser C.M."/>
            <person name="Venter J.C."/>
        </authorList>
    </citation>
    <scope>NUCLEOTIDE SEQUENCE [LARGE SCALE GENOMIC DNA]</scope>
    <source>
        <strain>cv. Columbia</strain>
    </source>
</reference>
<reference key="2">
    <citation type="journal article" date="2017" name="Plant J.">
        <title>Araport11: a complete reannotation of the Arabidopsis thaliana reference genome.</title>
        <authorList>
            <person name="Cheng C.Y."/>
            <person name="Krishnakumar V."/>
            <person name="Chan A.P."/>
            <person name="Thibaud-Nissen F."/>
            <person name="Schobel S."/>
            <person name="Town C.D."/>
        </authorList>
    </citation>
    <scope>GENOME REANNOTATION</scope>
    <source>
        <strain>cv. Columbia</strain>
    </source>
</reference>
<reference key="3">
    <citation type="journal article" date="2003" name="Science">
        <title>Empirical analysis of transcriptional activity in the Arabidopsis genome.</title>
        <authorList>
            <person name="Yamada K."/>
            <person name="Lim J."/>
            <person name="Dale J.M."/>
            <person name="Chen H."/>
            <person name="Shinn P."/>
            <person name="Palm C.J."/>
            <person name="Southwick A.M."/>
            <person name="Wu H.C."/>
            <person name="Kim C.J."/>
            <person name="Nguyen M."/>
            <person name="Pham P.K."/>
            <person name="Cheuk R.F."/>
            <person name="Karlin-Newmann G."/>
            <person name="Liu S.X."/>
            <person name="Lam B."/>
            <person name="Sakano H."/>
            <person name="Wu T."/>
            <person name="Yu G."/>
            <person name="Miranda M."/>
            <person name="Quach H.L."/>
            <person name="Tripp M."/>
            <person name="Chang C.H."/>
            <person name="Lee J.M."/>
            <person name="Toriumi M.J."/>
            <person name="Chan M.M."/>
            <person name="Tang C.C."/>
            <person name="Onodera C.S."/>
            <person name="Deng J.M."/>
            <person name="Akiyama K."/>
            <person name="Ansari Y."/>
            <person name="Arakawa T."/>
            <person name="Banh J."/>
            <person name="Banno F."/>
            <person name="Bowser L."/>
            <person name="Brooks S.Y."/>
            <person name="Carninci P."/>
            <person name="Chao Q."/>
            <person name="Choy N."/>
            <person name="Enju A."/>
            <person name="Goldsmith A.D."/>
            <person name="Gurjal M."/>
            <person name="Hansen N.F."/>
            <person name="Hayashizaki Y."/>
            <person name="Johnson-Hopson C."/>
            <person name="Hsuan V.W."/>
            <person name="Iida K."/>
            <person name="Karnes M."/>
            <person name="Khan S."/>
            <person name="Koesema E."/>
            <person name="Ishida J."/>
            <person name="Jiang P.X."/>
            <person name="Jones T."/>
            <person name="Kawai J."/>
            <person name="Kamiya A."/>
            <person name="Meyers C."/>
            <person name="Nakajima M."/>
            <person name="Narusaka M."/>
            <person name="Seki M."/>
            <person name="Sakurai T."/>
            <person name="Satou M."/>
            <person name="Tamse R."/>
            <person name="Vaysberg M."/>
            <person name="Wallender E.K."/>
            <person name="Wong C."/>
            <person name="Yamamura Y."/>
            <person name="Yuan S."/>
            <person name="Shinozaki K."/>
            <person name="Davis R.W."/>
            <person name="Theologis A."/>
            <person name="Ecker J.R."/>
        </authorList>
    </citation>
    <scope>NUCLEOTIDE SEQUENCE [LARGE SCALE MRNA]</scope>
    <source>
        <strain>cv. Columbia</strain>
    </source>
</reference>
<reference key="4">
    <citation type="submission" date="2002-03" db="EMBL/GenBank/DDBJ databases">
        <title>Full-length cDNA from Arabidopsis thaliana.</title>
        <authorList>
            <person name="Brover V.V."/>
            <person name="Troukhan M.E."/>
            <person name="Alexandrov N.A."/>
            <person name="Lu Y.-P."/>
            <person name="Flavell R.B."/>
            <person name="Feldmann K.A."/>
        </authorList>
    </citation>
    <scope>NUCLEOTIDE SEQUENCE [LARGE SCALE MRNA]</scope>
</reference>
<reference key="5">
    <citation type="journal article" date="2004" name="Photosyn. Res.">
        <title>Characterization of Arabidopsis mutants for the variable subunit of ferredoxin:thioredoxin reductase.</title>
        <authorList>
            <person name="Keryer E."/>
            <person name="Collin V."/>
            <person name="Lavergne D."/>
            <person name="Lemaire S."/>
            <person name="Issakidis-Bourguet E."/>
        </authorList>
    </citation>
    <scope>GENE FAMILY</scope>
    <scope>NOMENCLATURE</scope>
    <source>
        <strain>cv. Wassilewskija</strain>
    </source>
</reference>
<reference key="6">
    <citation type="journal article" date="2020" name="Protein Sci.">
        <title>Structural basis for thioredoxin isoform-based fine-tuning of ferredoxin-thioredoxin reductase activity.</title>
        <authorList>
            <person name="Juniar L."/>
            <person name="Tanaka H."/>
            <person name="Yoshida K."/>
            <person name="Hisabori T."/>
            <person name="Kurisu G."/>
        </authorList>
    </citation>
    <scope>X-RAY CRYSTALLOGRAPHY (1.59 ANGSTROMS) OF 32-146 IN COMPLEX WITH [4FE-4S] CLUSTER</scope>
</reference>
<evidence type="ECO:0000250" key="1">
    <source>
        <dbReference type="UniProtKB" id="Q55389"/>
    </source>
</evidence>
<evidence type="ECO:0000255" key="2"/>
<evidence type="ECO:0000269" key="3">
    <source>
    </source>
</evidence>
<evidence type="ECO:0000303" key="4">
    <source>
    </source>
</evidence>
<evidence type="ECO:0000305" key="5"/>
<evidence type="ECO:0000312" key="6">
    <source>
        <dbReference type="Araport" id="AT2G04700"/>
    </source>
</evidence>
<evidence type="ECO:0000312" key="7">
    <source>
        <dbReference type="EMBL" id="AAD22336.1"/>
    </source>
</evidence>
<evidence type="ECO:0007744" key="8">
    <source>
        <dbReference type="PDB" id="7BZK"/>
    </source>
</evidence>
<evidence type="ECO:0007744" key="9">
    <source>
        <dbReference type="PDB" id="7C2B"/>
    </source>
</evidence>
<evidence type="ECO:0007744" key="10">
    <source>
        <dbReference type="PDB" id="7C3F"/>
    </source>
</evidence>
<evidence type="ECO:0007829" key="11">
    <source>
        <dbReference type="PDB" id="7BZK"/>
    </source>
</evidence>
<evidence type="ECO:0007829" key="12">
    <source>
        <dbReference type="PDB" id="7C3F"/>
    </source>
</evidence>
<protein>
    <recommendedName>
        <fullName evidence="1">Ferredoxin-thioredoxin reductase catalytic chain, chloroplastic</fullName>
        <shortName evidence="1">FTR-C</shortName>
        <ecNumber evidence="1">1.8.7.2</ecNumber>
    </recommendedName>
    <alternativeName>
        <fullName evidence="4">Ferredoxin-thioredoxin reductase subunit B</fullName>
        <shortName evidence="4">FTR-B</shortName>
    </alternativeName>
</protein>
<proteinExistence type="evidence at protein level"/>